<feature type="transit peptide" description="Chloroplast" evidence="2">
    <location>
        <begin position="1"/>
        <end position="35"/>
    </location>
</feature>
<feature type="chain" id="PRO_0000245318" description="ATP synthase subunit gamma, chloroplastic">
    <location>
        <begin position="36"/>
        <end position="359"/>
    </location>
</feature>
<feature type="peptide" id="PRO_0000245319" description="Inceptin">
    <location>
        <begin position="233"/>
        <end position="243"/>
    </location>
</feature>
<feature type="active site" evidence="1">
    <location>
        <position position="124"/>
    </location>
</feature>
<feature type="disulfide bond">
    <location>
        <begin position="234"/>
        <end position="240"/>
    </location>
</feature>
<accession>P0C1M0</accession>
<protein>
    <recommendedName>
        <fullName>ATP synthase subunit gamma, chloroplastic</fullName>
    </recommendedName>
    <alternativeName>
        <fullName>F-ATPase gamma subunit</fullName>
    </alternativeName>
    <component>
        <recommendedName>
            <fullName>Inceptin</fullName>
        </recommendedName>
    </component>
</protein>
<dbReference type="EMBL" id="AY108268">
    <property type="status" value="NOT_ANNOTATED_CDS"/>
    <property type="molecule type" value="mRNA"/>
</dbReference>
<dbReference type="RefSeq" id="NP_001150872.1">
    <property type="nucleotide sequence ID" value="NM_001157400.2"/>
</dbReference>
<dbReference type="SMR" id="P0C1M0"/>
<dbReference type="FunCoup" id="P0C1M0">
    <property type="interactions" value="1353"/>
</dbReference>
<dbReference type="STRING" id="4577.P0C1M0"/>
<dbReference type="PaxDb" id="4577-GRMZM2G048907_P01"/>
<dbReference type="EnsemblPlants" id="Zm00001eb322600_T001">
    <property type="protein sequence ID" value="Zm00001eb322600_P001"/>
    <property type="gene ID" value="Zm00001eb322600"/>
</dbReference>
<dbReference type="GeneID" id="100284505"/>
<dbReference type="Gramene" id="Zm00001eb322600_T001">
    <property type="protein sequence ID" value="Zm00001eb322600_P001"/>
    <property type="gene ID" value="Zm00001eb322600"/>
</dbReference>
<dbReference type="KEGG" id="zma:100284505"/>
<dbReference type="eggNOG" id="KOG1531">
    <property type="taxonomic scope" value="Eukaryota"/>
</dbReference>
<dbReference type="InParanoid" id="P0C1M0"/>
<dbReference type="OMA" id="VMQFEQD"/>
<dbReference type="OrthoDB" id="239812at2759"/>
<dbReference type="Proteomes" id="UP000007305">
    <property type="component" value="Chromosome 7"/>
</dbReference>
<dbReference type="ExpressionAtlas" id="P0C1M0">
    <property type="expression patterns" value="baseline and differential"/>
</dbReference>
<dbReference type="GO" id="GO:0009535">
    <property type="term" value="C:chloroplast thylakoid membrane"/>
    <property type="evidence" value="ECO:0007669"/>
    <property type="project" value="UniProtKB-SubCell"/>
</dbReference>
<dbReference type="GO" id="GO:0045259">
    <property type="term" value="C:proton-transporting ATP synthase complex"/>
    <property type="evidence" value="ECO:0007669"/>
    <property type="project" value="UniProtKB-KW"/>
</dbReference>
<dbReference type="GO" id="GO:0046933">
    <property type="term" value="F:proton-transporting ATP synthase activity, rotational mechanism"/>
    <property type="evidence" value="ECO:0007669"/>
    <property type="project" value="InterPro"/>
</dbReference>
<dbReference type="GO" id="GO:0015986">
    <property type="term" value="P:proton motive force-driven ATP synthesis"/>
    <property type="evidence" value="ECO:0000318"/>
    <property type="project" value="GO_Central"/>
</dbReference>
<dbReference type="CDD" id="cd12151">
    <property type="entry name" value="F1-ATPase_gamma"/>
    <property type="match status" value="1"/>
</dbReference>
<dbReference type="FunFam" id="1.10.287.80:FF:000003">
    <property type="entry name" value="ATP synthase gamma chain, chloroplastic"/>
    <property type="match status" value="1"/>
</dbReference>
<dbReference type="FunFam" id="1.10.287.80:FF:000004">
    <property type="entry name" value="ATP synthase gamma chain, chloroplastic"/>
    <property type="match status" value="1"/>
</dbReference>
<dbReference type="FunFam" id="3.40.1380.10:FF:000004">
    <property type="entry name" value="ATP synthase gamma chain, chloroplastic"/>
    <property type="match status" value="1"/>
</dbReference>
<dbReference type="Gene3D" id="3.40.1380.10">
    <property type="match status" value="1"/>
</dbReference>
<dbReference type="Gene3D" id="1.10.287.80">
    <property type="entry name" value="ATP synthase, gamma subunit, helix hairpin domain"/>
    <property type="match status" value="2"/>
</dbReference>
<dbReference type="HAMAP" id="MF_00815">
    <property type="entry name" value="ATP_synth_gamma_bact"/>
    <property type="match status" value="1"/>
</dbReference>
<dbReference type="InterPro" id="IPR035968">
    <property type="entry name" value="ATP_synth_F1_ATPase_gsu"/>
</dbReference>
<dbReference type="InterPro" id="IPR000131">
    <property type="entry name" value="ATP_synth_F1_gsu"/>
</dbReference>
<dbReference type="InterPro" id="IPR023632">
    <property type="entry name" value="ATP_synth_F1_gsu_CS"/>
</dbReference>
<dbReference type="NCBIfam" id="TIGR01146">
    <property type="entry name" value="ATPsyn_F1gamma"/>
    <property type="match status" value="1"/>
</dbReference>
<dbReference type="NCBIfam" id="NF004145">
    <property type="entry name" value="PRK05621.1-2"/>
    <property type="match status" value="1"/>
</dbReference>
<dbReference type="PANTHER" id="PTHR11693">
    <property type="entry name" value="ATP SYNTHASE GAMMA CHAIN"/>
    <property type="match status" value="1"/>
</dbReference>
<dbReference type="PANTHER" id="PTHR11693:SF41">
    <property type="entry name" value="ATP SYNTHASE GAMMA CHAIN, CHLOROPLASTIC"/>
    <property type="match status" value="1"/>
</dbReference>
<dbReference type="Pfam" id="PF00231">
    <property type="entry name" value="ATP-synt"/>
    <property type="match status" value="1"/>
</dbReference>
<dbReference type="PRINTS" id="PR00126">
    <property type="entry name" value="ATPASEGAMMA"/>
</dbReference>
<dbReference type="SUPFAM" id="SSF52943">
    <property type="entry name" value="ATP synthase (F1-ATPase), gamma subunit"/>
    <property type="match status" value="1"/>
</dbReference>
<dbReference type="PROSITE" id="PS00153">
    <property type="entry name" value="ATPASE_GAMMA"/>
    <property type="match status" value="1"/>
</dbReference>
<evidence type="ECO:0000250" key="1"/>
<evidence type="ECO:0000255" key="2"/>
<evidence type="ECO:0000269" key="3">
    <source>
    </source>
</evidence>
<evidence type="ECO:0000305" key="4"/>
<proteinExistence type="evidence at protein level"/>
<name>ATPG_MAIZE</name>
<keyword id="KW-0066">ATP synthesis</keyword>
<keyword id="KW-0139">CF(1)</keyword>
<keyword id="KW-0150">Chloroplast</keyword>
<keyword id="KW-0903">Direct protein sequencing</keyword>
<keyword id="KW-1015">Disulfide bond</keyword>
<keyword id="KW-0375">Hydrogen ion transport</keyword>
<keyword id="KW-0406">Ion transport</keyword>
<keyword id="KW-0472">Membrane</keyword>
<keyword id="KW-0934">Plastid</keyword>
<keyword id="KW-1185">Reference proteome</keyword>
<keyword id="KW-0793">Thylakoid</keyword>
<keyword id="KW-0809">Transit peptide</keyword>
<keyword id="KW-0813">Transport</keyword>
<reference key="1">
    <citation type="journal article" date="2004" name="Plant Physiol.">
        <title>Anchoring 9,371 maize expressed sequence tagged unigenes to the bacterial artificial chromosome contig map by two-dimensional overgo hybridization.</title>
        <authorList>
            <person name="Gardiner J."/>
            <person name="Schroeder S."/>
            <person name="Polacco M.L."/>
            <person name="Sanchez-Villeda H."/>
            <person name="Fang Z."/>
            <person name="Morgante M."/>
            <person name="Landewe T."/>
            <person name="Fengler K."/>
            <person name="Useche F."/>
            <person name="Hanafey M."/>
            <person name="Tingey S."/>
            <person name="Chou H."/>
            <person name="Wing R."/>
            <person name="Soderlund C."/>
            <person name="Coe E.H. Jr."/>
        </authorList>
    </citation>
    <scope>NUCLEOTIDE SEQUENCE [LARGE SCALE MRNA]</scope>
</reference>
<reference key="2">
    <citation type="journal article" date="2006" name="Proc. Natl. Acad. Sci. U.S.A.">
        <title>Fragments of ATP synthase mediate plant perception of insect attack.</title>
        <authorList>
            <person name="Schmelz E.A."/>
            <person name="Carroll M.J."/>
            <person name="Leclere S."/>
            <person name="Phipps S.M."/>
            <person name="Meredith J."/>
            <person name="Chourey P.S."/>
            <person name="Alborn H.T."/>
            <person name="Teal P.E."/>
        </authorList>
    </citation>
    <scope>PROTEIN SEQUENCE OF 233-243</scope>
    <scope>FUNCTION OF INCEPTIN</scope>
</reference>
<organism>
    <name type="scientific">Zea mays</name>
    <name type="common">Maize</name>
    <dbReference type="NCBI Taxonomy" id="4577"/>
    <lineage>
        <taxon>Eukaryota</taxon>
        <taxon>Viridiplantae</taxon>
        <taxon>Streptophyta</taxon>
        <taxon>Embryophyta</taxon>
        <taxon>Tracheophyta</taxon>
        <taxon>Spermatophyta</taxon>
        <taxon>Magnoliopsida</taxon>
        <taxon>Liliopsida</taxon>
        <taxon>Poales</taxon>
        <taxon>Poaceae</taxon>
        <taxon>PACMAD clade</taxon>
        <taxon>Panicoideae</taxon>
        <taxon>Andropogonodae</taxon>
        <taxon>Andropogoneae</taxon>
        <taxon>Tripsacinae</taxon>
        <taxon>Zea</taxon>
    </lineage>
</organism>
<comment type="function">
    <text evidence="3">Produces ATP from ADP in the presence of a proton gradient across the membrane. The gamma chain is believed to be important in regulating ATPase activity and the flow of protons through the CF(0) complex.</text>
</comment>
<comment type="function">
    <text evidence="3">Inceptin is a proteolytic fragment produced by insect larvae that previously ingested the protein. This peptide mediate plant perception of herbivory through the induction of volatile, phenylpropanoid and protease inhibitor defenses such as ethylene, jasmonic acid and salicylic acid for example.</text>
</comment>
<comment type="subunit">
    <text evidence="1">F-type ATPases have 2 components, CF(1) - the catalytic core - and CF(0) - the membrane proton channel. CF(1) has five subunits: alpha(3), beta(3), gamma(1), delta(1), epsilon(1). CF(0) has four main subunits: a, b, b' and c (By similarity).</text>
</comment>
<comment type="subcellular location">
    <subcellularLocation>
        <location evidence="1">Plastid</location>
        <location evidence="1">Chloroplast thylakoid membrane</location>
        <topology evidence="1">Peripheral membrane protein</topology>
    </subcellularLocation>
</comment>
<comment type="similarity">
    <text evidence="4">Belongs to the ATPase gamma chain family.</text>
</comment>
<sequence>MSCSHLSTAWSSSALASSASTTRRRSPPRSGLLVRCSLRELRTRIDSVRNTQKITEAMKLVAAAKVRRAQEAVVSSRPFSEALVEVLYNMNQEIQTEDIDLPLTRTRPVKKVALVVLTGERGLCGSFNNNVLKKAETRIDELKQLGLQYTVVSVGKKGNAYFQRRPYIPLERDLEVSSVPTVKDSQAICDLVYSLFVSEEVDKVELLYSKFVSLVRSDPIIQTLLPMSPKGEICDVNGVCVDATEDELFRLTTKEGKLTVEREKVKIETQPFSPVVQFEQDPVQILDALLPLYLNSQILRALQESLASELAARMSAMSSATDNAIELRKNLSIAYNRQRQAKITGEILEIVAGADALAG</sequence>